<proteinExistence type="inferred from homology"/>
<keyword id="KW-0456">Lyase</keyword>
<evidence type="ECO:0000255" key="1">
    <source>
        <dbReference type="HAMAP-Rule" id="MF_01830"/>
    </source>
</evidence>
<name>Y3550_BURCH</name>
<protein>
    <recommendedName>
        <fullName evidence="1">Putative hydro-lyase Bcen2424_3550</fullName>
        <ecNumber evidence="1">4.2.1.-</ecNumber>
    </recommendedName>
</protein>
<gene>
    <name type="ordered locus">Bcen2424_3550</name>
</gene>
<reference key="1">
    <citation type="submission" date="2006-08" db="EMBL/GenBank/DDBJ databases">
        <title>Complete sequence of chromosome 2 of Burkholderia cenocepacia HI2424.</title>
        <authorList>
            <person name="Copeland A."/>
            <person name="Lucas S."/>
            <person name="Lapidus A."/>
            <person name="Barry K."/>
            <person name="Detter J.C."/>
            <person name="Glavina del Rio T."/>
            <person name="Hammon N."/>
            <person name="Israni S."/>
            <person name="Pitluck S."/>
            <person name="Chain P."/>
            <person name="Malfatti S."/>
            <person name="Shin M."/>
            <person name="Vergez L."/>
            <person name="Schmutz J."/>
            <person name="Larimer F."/>
            <person name="Land M."/>
            <person name="Hauser L."/>
            <person name="Kyrpides N."/>
            <person name="Kim E."/>
            <person name="LiPuma J.J."/>
            <person name="Gonzalez C.F."/>
            <person name="Konstantinidis K."/>
            <person name="Tiedje J.M."/>
            <person name="Richardson P."/>
        </authorList>
    </citation>
    <scope>NUCLEOTIDE SEQUENCE [LARGE SCALE GENOMIC DNA]</scope>
    <source>
        <strain>HI2424</strain>
    </source>
</reference>
<sequence length="257" mass="27878">MTPSEFRQSVRRGAFRGPTAGHCGPFAQANLAILPDAYAHDFLRFCQANPKACPLLGVGEPGAFRIDALGDDLDIRTDVPSYNVYRDGRLTERVESLDALWRDDFVVFAIGCSFSFEDMLAREGIGLRHVEEGCNVPMYRTSIANRRAGIFGGQLVVSMRPLRGADAIRAVQITSRFPGVHGAPIHIGDPRALGIEDLNAPEFGDAVTIRDGELPVFWACGVTPQTALMDAKLPIAIAHTPGHMLMTDITNASLAVF</sequence>
<accession>A0AY13</accession>
<dbReference type="EC" id="4.2.1.-" evidence="1"/>
<dbReference type="EMBL" id="CP000459">
    <property type="protein sequence ID" value="ABK10289.1"/>
    <property type="molecule type" value="Genomic_DNA"/>
</dbReference>
<dbReference type="RefSeq" id="WP_011694590.1">
    <property type="nucleotide sequence ID" value="NC_008543.1"/>
</dbReference>
<dbReference type="SMR" id="A0AY13"/>
<dbReference type="KEGG" id="bch:Bcen2424_3550"/>
<dbReference type="HOGENOM" id="CLU_059759_0_0_4"/>
<dbReference type="GO" id="GO:0016829">
    <property type="term" value="F:lyase activity"/>
    <property type="evidence" value="ECO:0007669"/>
    <property type="project" value="UniProtKB-KW"/>
</dbReference>
<dbReference type="FunFam" id="3.30.2040.10:FF:000001">
    <property type="entry name" value="D-glutamate cyclase, mitochondrial"/>
    <property type="match status" value="1"/>
</dbReference>
<dbReference type="Gene3D" id="3.40.1640.10">
    <property type="entry name" value="PSTPO5379-like"/>
    <property type="match status" value="1"/>
</dbReference>
<dbReference type="Gene3D" id="3.30.2040.10">
    <property type="entry name" value="PSTPO5379-like domain"/>
    <property type="match status" value="1"/>
</dbReference>
<dbReference type="HAMAP" id="MF_01830">
    <property type="entry name" value="Hydro_lyase"/>
    <property type="match status" value="1"/>
</dbReference>
<dbReference type="InterPro" id="IPR009906">
    <property type="entry name" value="D-Glu_cyclase"/>
</dbReference>
<dbReference type="InterPro" id="IPR038021">
    <property type="entry name" value="Putative_hydro-lyase"/>
</dbReference>
<dbReference type="InterPro" id="IPR016938">
    <property type="entry name" value="UPF0317"/>
</dbReference>
<dbReference type="NCBIfam" id="NF003969">
    <property type="entry name" value="PRK05463.1"/>
    <property type="match status" value="1"/>
</dbReference>
<dbReference type="PANTHER" id="PTHR32022">
    <property type="entry name" value="D-GLUTAMATE CYCLASE, MITOCHONDRIAL"/>
    <property type="match status" value="1"/>
</dbReference>
<dbReference type="PANTHER" id="PTHR32022:SF10">
    <property type="entry name" value="D-GLUTAMATE CYCLASE, MITOCHONDRIAL"/>
    <property type="match status" value="1"/>
</dbReference>
<dbReference type="Pfam" id="PF07286">
    <property type="entry name" value="D-Glu_cyclase"/>
    <property type="match status" value="1"/>
</dbReference>
<dbReference type="PIRSF" id="PIRSF029755">
    <property type="entry name" value="UCP029755"/>
    <property type="match status" value="1"/>
</dbReference>
<dbReference type="SUPFAM" id="SSF160920">
    <property type="entry name" value="PSTPO5379-like"/>
    <property type="match status" value="1"/>
</dbReference>
<organism>
    <name type="scientific">Burkholderia cenocepacia (strain HI2424)</name>
    <dbReference type="NCBI Taxonomy" id="331272"/>
    <lineage>
        <taxon>Bacteria</taxon>
        <taxon>Pseudomonadati</taxon>
        <taxon>Pseudomonadota</taxon>
        <taxon>Betaproteobacteria</taxon>
        <taxon>Burkholderiales</taxon>
        <taxon>Burkholderiaceae</taxon>
        <taxon>Burkholderia</taxon>
        <taxon>Burkholderia cepacia complex</taxon>
    </lineage>
</organism>
<comment type="similarity">
    <text evidence="1">Belongs to the D-glutamate cyclase family.</text>
</comment>
<feature type="chain" id="PRO_0000379824" description="Putative hydro-lyase Bcen2424_3550">
    <location>
        <begin position="1"/>
        <end position="257"/>
    </location>
</feature>